<accession>Q7UJ19</accession>
<reference key="1">
    <citation type="journal article" date="2003" name="Proc. Natl. Acad. Sci. U.S.A.">
        <title>Complete genome sequence of the marine planctomycete Pirellula sp. strain 1.</title>
        <authorList>
            <person name="Gloeckner F.O."/>
            <person name="Kube M."/>
            <person name="Bauer M."/>
            <person name="Teeling H."/>
            <person name="Lombardot T."/>
            <person name="Ludwig W."/>
            <person name="Gade D."/>
            <person name="Beck A."/>
            <person name="Borzym K."/>
            <person name="Heitmann K."/>
            <person name="Rabus R."/>
            <person name="Schlesner H."/>
            <person name="Amann R."/>
            <person name="Reinhardt R."/>
        </authorList>
    </citation>
    <scope>NUCLEOTIDE SEQUENCE [LARGE SCALE GENOMIC DNA]</scope>
    <source>
        <strain>DSM 10527 / NCIMB 13988 / SH1</strain>
    </source>
</reference>
<sequence length="320" mass="35468">MNDTYQFDAAGALLSTQLPFPRRQGKVRDVYDLGDRLLIVSSDRISAFDYILPTGIPDKGRLLTAMSRFWFEQMDAGRIGQNVGSAGGDGSSNPRSISHHLISTDVPEDVAAVVDPKPLEGRVMVTRKASVVPFECVVRGYLEGSGWKEYQATGEVCGVSLPAGLKQCDQLSEAIFTPATKAEEGHDENVSYEVMSQSLGEEQSSQLRRMSLAIYQDASKIAAERGLLIADTKFEFGVVDGELMLIDEVLTPDSSRFWAADEYEPGHSQRSFDKQFVREYLQESDWDRNSPPPPLPESIAHQTADRYREGYERLVGKAFA</sequence>
<keyword id="KW-0067">ATP-binding</keyword>
<keyword id="KW-0436">Ligase</keyword>
<keyword id="KW-0547">Nucleotide-binding</keyword>
<keyword id="KW-0658">Purine biosynthesis</keyword>
<keyword id="KW-1185">Reference proteome</keyword>
<feature type="chain" id="PRO_0000100862" description="Phosphoribosylaminoimidazole-succinocarboxamide synthase">
    <location>
        <begin position="1"/>
        <end position="320"/>
    </location>
</feature>
<feature type="region of interest" description="Disordered" evidence="2">
    <location>
        <begin position="283"/>
        <end position="303"/>
    </location>
</feature>
<evidence type="ECO:0000255" key="1">
    <source>
        <dbReference type="HAMAP-Rule" id="MF_00137"/>
    </source>
</evidence>
<evidence type="ECO:0000256" key="2">
    <source>
        <dbReference type="SAM" id="MobiDB-lite"/>
    </source>
</evidence>
<evidence type="ECO:0000305" key="3"/>
<protein>
    <recommendedName>
        <fullName evidence="1">Phosphoribosylaminoimidazole-succinocarboxamide synthase</fullName>
        <ecNumber evidence="1">6.3.2.6</ecNumber>
    </recommendedName>
    <alternativeName>
        <fullName evidence="1">SAICAR synthetase</fullName>
    </alternativeName>
</protein>
<comment type="catalytic activity">
    <reaction evidence="1">
        <text>5-amino-1-(5-phospho-D-ribosyl)imidazole-4-carboxylate + L-aspartate + ATP = (2S)-2-[5-amino-1-(5-phospho-beta-D-ribosyl)imidazole-4-carboxamido]succinate + ADP + phosphate + 2 H(+)</text>
        <dbReference type="Rhea" id="RHEA:22628"/>
        <dbReference type="ChEBI" id="CHEBI:15378"/>
        <dbReference type="ChEBI" id="CHEBI:29991"/>
        <dbReference type="ChEBI" id="CHEBI:30616"/>
        <dbReference type="ChEBI" id="CHEBI:43474"/>
        <dbReference type="ChEBI" id="CHEBI:58443"/>
        <dbReference type="ChEBI" id="CHEBI:77657"/>
        <dbReference type="ChEBI" id="CHEBI:456216"/>
        <dbReference type="EC" id="6.3.2.6"/>
    </reaction>
</comment>
<comment type="pathway">
    <text evidence="1">Purine metabolism; IMP biosynthesis via de novo pathway; 5-amino-1-(5-phospho-D-ribosyl)imidazole-4-carboxamide from 5-amino-1-(5-phospho-D-ribosyl)imidazole-4-carboxylate: step 1/2.</text>
</comment>
<comment type="similarity">
    <text evidence="1">Belongs to the SAICAR synthetase family.</text>
</comment>
<comment type="sequence caution" evidence="3">
    <conflict type="erroneous initiation">
        <sequence resource="EMBL-CDS" id="CAD77441"/>
    </conflict>
</comment>
<gene>
    <name evidence="1" type="primary">purC</name>
    <name type="ordered locus">RB12194</name>
</gene>
<name>PUR7_RHOBA</name>
<proteinExistence type="inferred from homology"/>
<dbReference type="EC" id="6.3.2.6" evidence="1"/>
<dbReference type="EMBL" id="BX294154">
    <property type="protein sequence ID" value="CAD77441.1"/>
    <property type="status" value="ALT_INIT"/>
    <property type="molecule type" value="Genomic_DNA"/>
</dbReference>
<dbReference type="RefSeq" id="NP_870364.1">
    <property type="nucleotide sequence ID" value="NC_005027.1"/>
</dbReference>
<dbReference type="RefSeq" id="WP_164922494.1">
    <property type="nucleotide sequence ID" value="NC_005027.1"/>
</dbReference>
<dbReference type="SMR" id="Q7UJ19"/>
<dbReference type="STRING" id="243090.RB12194"/>
<dbReference type="EnsemblBacteria" id="CAD77441">
    <property type="protein sequence ID" value="CAD77441"/>
    <property type="gene ID" value="RB12194"/>
</dbReference>
<dbReference type="KEGG" id="rba:RB12194"/>
<dbReference type="PATRIC" id="fig|243090.15.peg.5890"/>
<dbReference type="eggNOG" id="COG0152">
    <property type="taxonomic scope" value="Bacteria"/>
</dbReference>
<dbReference type="HOGENOM" id="CLU_045637_0_0_0"/>
<dbReference type="InParanoid" id="Q7UJ19"/>
<dbReference type="OrthoDB" id="9801549at2"/>
<dbReference type="UniPathway" id="UPA00074">
    <property type="reaction ID" value="UER00131"/>
</dbReference>
<dbReference type="Proteomes" id="UP000001025">
    <property type="component" value="Chromosome"/>
</dbReference>
<dbReference type="GO" id="GO:0005524">
    <property type="term" value="F:ATP binding"/>
    <property type="evidence" value="ECO:0007669"/>
    <property type="project" value="UniProtKB-KW"/>
</dbReference>
<dbReference type="GO" id="GO:0004639">
    <property type="term" value="F:phosphoribosylaminoimidazolesuccinocarboxamide synthase activity"/>
    <property type="evidence" value="ECO:0000318"/>
    <property type="project" value="GO_Central"/>
</dbReference>
<dbReference type="GO" id="GO:0006189">
    <property type="term" value="P:'de novo' IMP biosynthetic process"/>
    <property type="evidence" value="ECO:0000318"/>
    <property type="project" value="GO_Central"/>
</dbReference>
<dbReference type="CDD" id="cd01414">
    <property type="entry name" value="SAICAR_synt_Sc"/>
    <property type="match status" value="1"/>
</dbReference>
<dbReference type="FunFam" id="3.30.470.20:FF:000015">
    <property type="entry name" value="Phosphoribosylaminoimidazole-succinocarboxamide synthase"/>
    <property type="match status" value="1"/>
</dbReference>
<dbReference type="Gene3D" id="3.30.470.20">
    <property type="entry name" value="ATP-grasp fold, B domain"/>
    <property type="match status" value="1"/>
</dbReference>
<dbReference type="Gene3D" id="3.30.200.20">
    <property type="entry name" value="Phosphorylase Kinase, domain 1"/>
    <property type="match status" value="1"/>
</dbReference>
<dbReference type="HAMAP" id="MF_00137">
    <property type="entry name" value="SAICAR_synth"/>
    <property type="match status" value="1"/>
</dbReference>
<dbReference type="InterPro" id="IPR028923">
    <property type="entry name" value="SAICAR_synt/ADE2_N"/>
</dbReference>
<dbReference type="InterPro" id="IPR001636">
    <property type="entry name" value="SAICAR_synth"/>
</dbReference>
<dbReference type="InterPro" id="IPR018236">
    <property type="entry name" value="SAICAR_synthetase_CS"/>
</dbReference>
<dbReference type="NCBIfam" id="NF010568">
    <property type="entry name" value="PRK13961.1"/>
    <property type="match status" value="1"/>
</dbReference>
<dbReference type="NCBIfam" id="TIGR00081">
    <property type="entry name" value="purC"/>
    <property type="match status" value="1"/>
</dbReference>
<dbReference type="PANTHER" id="PTHR43700">
    <property type="entry name" value="PHOSPHORIBOSYLAMINOIMIDAZOLE-SUCCINOCARBOXAMIDE SYNTHASE"/>
    <property type="match status" value="1"/>
</dbReference>
<dbReference type="PANTHER" id="PTHR43700:SF1">
    <property type="entry name" value="PHOSPHORIBOSYLAMINOIMIDAZOLE-SUCCINOCARBOXAMIDE SYNTHASE"/>
    <property type="match status" value="1"/>
</dbReference>
<dbReference type="Pfam" id="PF01259">
    <property type="entry name" value="SAICAR_synt"/>
    <property type="match status" value="1"/>
</dbReference>
<dbReference type="SUPFAM" id="SSF56104">
    <property type="entry name" value="SAICAR synthase-like"/>
    <property type="match status" value="1"/>
</dbReference>
<dbReference type="PROSITE" id="PS01057">
    <property type="entry name" value="SAICAR_SYNTHETASE_1"/>
    <property type="match status" value="1"/>
</dbReference>
<dbReference type="PROSITE" id="PS01058">
    <property type="entry name" value="SAICAR_SYNTHETASE_2"/>
    <property type="match status" value="1"/>
</dbReference>
<organism>
    <name type="scientific">Rhodopirellula baltica (strain DSM 10527 / NCIMB 13988 / SH1)</name>
    <dbReference type="NCBI Taxonomy" id="243090"/>
    <lineage>
        <taxon>Bacteria</taxon>
        <taxon>Pseudomonadati</taxon>
        <taxon>Planctomycetota</taxon>
        <taxon>Planctomycetia</taxon>
        <taxon>Pirellulales</taxon>
        <taxon>Pirellulaceae</taxon>
        <taxon>Rhodopirellula</taxon>
    </lineage>
</organism>